<accession>Q8YGA4</accession>
<evidence type="ECO:0000255" key="1">
    <source>
        <dbReference type="HAMAP-Rule" id="MF_00451"/>
    </source>
</evidence>
<name>NDK_BRUME</name>
<keyword id="KW-0067">ATP-binding</keyword>
<keyword id="KW-0963">Cytoplasm</keyword>
<keyword id="KW-0418">Kinase</keyword>
<keyword id="KW-0460">Magnesium</keyword>
<keyword id="KW-0479">Metal-binding</keyword>
<keyword id="KW-0546">Nucleotide metabolism</keyword>
<keyword id="KW-0547">Nucleotide-binding</keyword>
<keyword id="KW-0597">Phosphoprotein</keyword>
<keyword id="KW-0808">Transferase</keyword>
<organism>
    <name type="scientific">Brucella melitensis biotype 1 (strain ATCC 23456 / CCUG 17765 / NCTC 10094 / 16M)</name>
    <dbReference type="NCBI Taxonomy" id="224914"/>
    <lineage>
        <taxon>Bacteria</taxon>
        <taxon>Pseudomonadati</taxon>
        <taxon>Pseudomonadota</taxon>
        <taxon>Alphaproteobacteria</taxon>
        <taxon>Hyphomicrobiales</taxon>
        <taxon>Brucellaceae</taxon>
        <taxon>Brucella/Ochrobactrum group</taxon>
        <taxon>Brucella</taxon>
    </lineage>
</organism>
<comment type="function">
    <text evidence="1">Major role in the synthesis of nucleoside triphosphates other than ATP. The ATP gamma phosphate is transferred to the NDP beta phosphate via a ping-pong mechanism, using a phosphorylated active-site intermediate.</text>
</comment>
<comment type="catalytic activity">
    <reaction evidence="1">
        <text>a 2'-deoxyribonucleoside 5'-diphosphate + ATP = a 2'-deoxyribonucleoside 5'-triphosphate + ADP</text>
        <dbReference type="Rhea" id="RHEA:44640"/>
        <dbReference type="ChEBI" id="CHEBI:30616"/>
        <dbReference type="ChEBI" id="CHEBI:61560"/>
        <dbReference type="ChEBI" id="CHEBI:73316"/>
        <dbReference type="ChEBI" id="CHEBI:456216"/>
        <dbReference type="EC" id="2.7.4.6"/>
    </reaction>
</comment>
<comment type="catalytic activity">
    <reaction evidence="1">
        <text>a ribonucleoside 5'-diphosphate + ATP = a ribonucleoside 5'-triphosphate + ADP</text>
        <dbReference type="Rhea" id="RHEA:18113"/>
        <dbReference type="ChEBI" id="CHEBI:30616"/>
        <dbReference type="ChEBI" id="CHEBI:57930"/>
        <dbReference type="ChEBI" id="CHEBI:61557"/>
        <dbReference type="ChEBI" id="CHEBI:456216"/>
        <dbReference type="EC" id="2.7.4.6"/>
    </reaction>
</comment>
<comment type="cofactor">
    <cofactor evidence="1">
        <name>Mg(2+)</name>
        <dbReference type="ChEBI" id="CHEBI:18420"/>
    </cofactor>
</comment>
<comment type="subunit">
    <text evidence="1">Homotetramer.</text>
</comment>
<comment type="subcellular location">
    <subcellularLocation>
        <location evidence="1">Cytoplasm</location>
    </subcellularLocation>
</comment>
<comment type="similarity">
    <text evidence="1">Belongs to the NDK family.</text>
</comment>
<sequence>MAIERTFSMIKPDATRRNLTGAIIAKLEEAGLRVVASKRVWMSRREAEGFYAVHKDRPFFGELVEFMSSGPTVVQVLEGENAIAKNREVMGATNPANADEGTIRKAFALSIGENSVHGSDAPETAAEEIAYWFSGTEIVG</sequence>
<protein>
    <recommendedName>
        <fullName evidence="1">Nucleoside diphosphate kinase</fullName>
        <shortName evidence="1">NDK</shortName>
        <shortName evidence="1">NDP kinase</shortName>
        <ecNumber evidence="1">2.7.4.6</ecNumber>
    </recommendedName>
    <alternativeName>
        <fullName evidence="1">Nucleoside-2-P kinase</fullName>
    </alternativeName>
</protein>
<dbReference type="EC" id="2.7.4.6" evidence="1"/>
<dbReference type="EMBL" id="AE008917">
    <property type="protein sequence ID" value="AAL52437.1"/>
    <property type="molecule type" value="Genomic_DNA"/>
</dbReference>
<dbReference type="PIR" id="AB3409">
    <property type="entry name" value="AB3409"/>
</dbReference>
<dbReference type="RefSeq" id="WP_004683449.1">
    <property type="nucleotide sequence ID" value="NZ_GG703778.1"/>
</dbReference>
<dbReference type="SMR" id="Q8YGA4"/>
<dbReference type="GeneID" id="29594109"/>
<dbReference type="KEGG" id="bme:BMEI1256"/>
<dbReference type="KEGG" id="bmel:DK63_149"/>
<dbReference type="PATRIC" id="fig|224914.52.peg.155"/>
<dbReference type="eggNOG" id="COG0105">
    <property type="taxonomic scope" value="Bacteria"/>
</dbReference>
<dbReference type="Proteomes" id="UP000000419">
    <property type="component" value="Chromosome I"/>
</dbReference>
<dbReference type="GO" id="GO:0005737">
    <property type="term" value="C:cytoplasm"/>
    <property type="evidence" value="ECO:0007669"/>
    <property type="project" value="UniProtKB-SubCell"/>
</dbReference>
<dbReference type="GO" id="GO:0005524">
    <property type="term" value="F:ATP binding"/>
    <property type="evidence" value="ECO:0007669"/>
    <property type="project" value="UniProtKB-UniRule"/>
</dbReference>
<dbReference type="GO" id="GO:0046872">
    <property type="term" value="F:metal ion binding"/>
    <property type="evidence" value="ECO:0007669"/>
    <property type="project" value="UniProtKB-KW"/>
</dbReference>
<dbReference type="GO" id="GO:0004550">
    <property type="term" value="F:nucleoside diphosphate kinase activity"/>
    <property type="evidence" value="ECO:0007669"/>
    <property type="project" value="UniProtKB-UniRule"/>
</dbReference>
<dbReference type="GO" id="GO:0006241">
    <property type="term" value="P:CTP biosynthetic process"/>
    <property type="evidence" value="ECO:0007669"/>
    <property type="project" value="UniProtKB-UniRule"/>
</dbReference>
<dbReference type="GO" id="GO:0006183">
    <property type="term" value="P:GTP biosynthetic process"/>
    <property type="evidence" value="ECO:0007669"/>
    <property type="project" value="UniProtKB-UniRule"/>
</dbReference>
<dbReference type="GO" id="GO:0006228">
    <property type="term" value="P:UTP biosynthetic process"/>
    <property type="evidence" value="ECO:0007669"/>
    <property type="project" value="UniProtKB-UniRule"/>
</dbReference>
<dbReference type="CDD" id="cd04413">
    <property type="entry name" value="NDPk_I"/>
    <property type="match status" value="1"/>
</dbReference>
<dbReference type="FunFam" id="3.30.70.141:FF:000001">
    <property type="entry name" value="Nucleoside diphosphate kinase"/>
    <property type="match status" value="1"/>
</dbReference>
<dbReference type="Gene3D" id="3.30.70.141">
    <property type="entry name" value="Nucleoside diphosphate kinase-like domain"/>
    <property type="match status" value="1"/>
</dbReference>
<dbReference type="HAMAP" id="MF_00451">
    <property type="entry name" value="NDP_kinase"/>
    <property type="match status" value="1"/>
</dbReference>
<dbReference type="InterPro" id="IPR034907">
    <property type="entry name" value="NDK-like_dom"/>
</dbReference>
<dbReference type="InterPro" id="IPR036850">
    <property type="entry name" value="NDK-like_dom_sf"/>
</dbReference>
<dbReference type="InterPro" id="IPR001564">
    <property type="entry name" value="Nucleoside_diP_kinase"/>
</dbReference>
<dbReference type="InterPro" id="IPR023005">
    <property type="entry name" value="Nucleoside_diP_kinase_AS"/>
</dbReference>
<dbReference type="NCBIfam" id="NF001908">
    <property type="entry name" value="PRK00668.1"/>
    <property type="match status" value="1"/>
</dbReference>
<dbReference type="PANTHER" id="PTHR11349">
    <property type="entry name" value="NUCLEOSIDE DIPHOSPHATE KINASE"/>
    <property type="match status" value="1"/>
</dbReference>
<dbReference type="Pfam" id="PF00334">
    <property type="entry name" value="NDK"/>
    <property type="match status" value="1"/>
</dbReference>
<dbReference type="PRINTS" id="PR01243">
    <property type="entry name" value="NUCDPKINASE"/>
</dbReference>
<dbReference type="SMART" id="SM00562">
    <property type="entry name" value="NDK"/>
    <property type="match status" value="1"/>
</dbReference>
<dbReference type="SUPFAM" id="SSF54919">
    <property type="entry name" value="Nucleoside diphosphate kinase, NDK"/>
    <property type="match status" value="1"/>
</dbReference>
<dbReference type="PROSITE" id="PS00469">
    <property type="entry name" value="NDPK"/>
    <property type="match status" value="1"/>
</dbReference>
<dbReference type="PROSITE" id="PS51374">
    <property type="entry name" value="NDPK_LIKE"/>
    <property type="match status" value="1"/>
</dbReference>
<reference key="1">
    <citation type="journal article" date="2002" name="Proc. Natl. Acad. Sci. U.S.A.">
        <title>The genome sequence of the facultative intracellular pathogen Brucella melitensis.</title>
        <authorList>
            <person name="DelVecchio V.G."/>
            <person name="Kapatral V."/>
            <person name="Redkar R.J."/>
            <person name="Patra G."/>
            <person name="Mujer C."/>
            <person name="Los T."/>
            <person name="Ivanova N."/>
            <person name="Anderson I."/>
            <person name="Bhattacharyya A."/>
            <person name="Lykidis A."/>
            <person name="Reznik G."/>
            <person name="Jablonski L."/>
            <person name="Larsen N."/>
            <person name="D'Souza M."/>
            <person name="Bernal A."/>
            <person name="Mazur M."/>
            <person name="Goltsman E."/>
            <person name="Selkov E."/>
            <person name="Elzer P.H."/>
            <person name="Hagius S."/>
            <person name="O'Callaghan D."/>
            <person name="Letesson J.-J."/>
            <person name="Haselkorn R."/>
            <person name="Kyrpides N.C."/>
            <person name="Overbeek R."/>
        </authorList>
    </citation>
    <scope>NUCLEOTIDE SEQUENCE [LARGE SCALE GENOMIC DNA]</scope>
    <source>
        <strain>ATCC 23456 / CCUG 17765 / NCTC 10094 / 16M</strain>
    </source>
</reference>
<proteinExistence type="inferred from homology"/>
<feature type="chain" id="PRO_0000136956" description="Nucleoside diphosphate kinase">
    <location>
        <begin position="1"/>
        <end position="140"/>
    </location>
</feature>
<feature type="active site" description="Pros-phosphohistidine intermediate" evidence="1">
    <location>
        <position position="117"/>
    </location>
</feature>
<feature type="binding site" evidence="1">
    <location>
        <position position="11"/>
    </location>
    <ligand>
        <name>ATP</name>
        <dbReference type="ChEBI" id="CHEBI:30616"/>
    </ligand>
</feature>
<feature type="binding site" evidence="1">
    <location>
        <position position="59"/>
    </location>
    <ligand>
        <name>ATP</name>
        <dbReference type="ChEBI" id="CHEBI:30616"/>
    </ligand>
</feature>
<feature type="binding site" evidence="1">
    <location>
        <position position="87"/>
    </location>
    <ligand>
        <name>ATP</name>
        <dbReference type="ChEBI" id="CHEBI:30616"/>
    </ligand>
</feature>
<feature type="binding site" evidence="1">
    <location>
        <position position="93"/>
    </location>
    <ligand>
        <name>ATP</name>
        <dbReference type="ChEBI" id="CHEBI:30616"/>
    </ligand>
</feature>
<feature type="binding site" evidence="1">
    <location>
        <position position="104"/>
    </location>
    <ligand>
        <name>ATP</name>
        <dbReference type="ChEBI" id="CHEBI:30616"/>
    </ligand>
</feature>
<feature type="binding site" evidence="1">
    <location>
        <position position="114"/>
    </location>
    <ligand>
        <name>ATP</name>
        <dbReference type="ChEBI" id="CHEBI:30616"/>
    </ligand>
</feature>
<gene>
    <name evidence="1" type="primary">ndk</name>
    <name type="ordered locus">BMEI1256</name>
</gene>